<feature type="chain" id="PRO_0000283765" description="Homeobox protein otx5-A">
    <location>
        <begin position="1"/>
        <end position="290"/>
    </location>
</feature>
<feature type="DNA-binding region" description="Homeobox" evidence="2">
    <location>
        <begin position="38"/>
        <end position="97"/>
    </location>
</feature>
<feature type="region of interest" description="Disordered" evidence="3">
    <location>
        <begin position="93"/>
        <end position="144"/>
    </location>
</feature>
<feature type="compositionally biased region" description="Polar residues" evidence="3">
    <location>
        <begin position="94"/>
        <end position="103"/>
    </location>
</feature>
<feature type="compositionally biased region" description="Polar residues" evidence="3">
    <location>
        <begin position="116"/>
        <end position="129"/>
    </location>
</feature>
<feature type="sequence conflict" description="In Ref. 2; AAH84194." evidence="5" ref="2">
    <original>W</original>
    <variation>C</variation>
    <location>
        <position position="85"/>
    </location>
</feature>
<dbReference type="EMBL" id="AB034702">
    <property type="protein sequence ID" value="BAA86260.1"/>
    <property type="molecule type" value="mRNA"/>
</dbReference>
<dbReference type="EMBL" id="BC084194">
    <property type="protein sequence ID" value="AAH84194.1"/>
    <property type="molecule type" value="mRNA"/>
</dbReference>
<dbReference type="SMR" id="Q9PVM0"/>
<dbReference type="DNASU" id="373653"/>
<dbReference type="GeneID" id="373653"/>
<dbReference type="KEGG" id="xla:373653"/>
<dbReference type="AGR" id="Xenbase:XB-GENE-6252876"/>
<dbReference type="CTD" id="373653"/>
<dbReference type="Xenbase" id="XB-GENE-6252876">
    <property type="gene designation" value="crx.S"/>
</dbReference>
<dbReference type="OMA" id="CMQRTTA"/>
<dbReference type="OrthoDB" id="6159439at2759"/>
<dbReference type="Proteomes" id="UP000186698">
    <property type="component" value="Chromosome 8S"/>
</dbReference>
<dbReference type="Bgee" id="373653">
    <property type="expression patterns" value="Expressed in camera-type eye and 3 other cell types or tissues"/>
</dbReference>
<dbReference type="GO" id="GO:0005634">
    <property type="term" value="C:nucleus"/>
    <property type="evidence" value="ECO:0000250"/>
    <property type="project" value="UniProtKB"/>
</dbReference>
<dbReference type="GO" id="GO:0000981">
    <property type="term" value="F:DNA-binding transcription factor activity, RNA polymerase II-specific"/>
    <property type="evidence" value="ECO:0000318"/>
    <property type="project" value="GO_Central"/>
</dbReference>
<dbReference type="GO" id="GO:0000978">
    <property type="term" value="F:RNA polymerase II cis-regulatory region sequence-specific DNA binding"/>
    <property type="evidence" value="ECO:0000318"/>
    <property type="project" value="GO_Central"/>
</dbReference>
<dbReference type="GO" id="GO:0009952">
    <property type="term" value="P:anterior/posterior pattern specification"/>
    <property type="evidence" value="ECO:0000315"/>
    <property type="project" value="UniProtKB"/>
</dbReference>
<dbReference type="GO" id="GO:0042706">
    <property type="term" value="P:eye photoreceptor cell fate commitment"/>
    <property type="evidence" value="ECO:0000250"/>
    <property type="project" value="UniProtKB"/>
</dbReference>
<dbReference type="GO" id="GO:0045944">
    <property type="term" value="P:positive regulation of transcription by RNA polymerase II"/>
    <property type="evidence" value="ECO:0000250"/>
    <property type="project" value="UniProtKB"/>
</dbReference>
<dbReference type="GO" id="GO:0006357">
    <property type="term" value="P:regulation of transcription by RNA polymerase II"/>
    <property type="evidence" value="ECO:0000318"/>
    <property type="project" value="GO_Central"/>
</dbReference>
<dbReference type="CDD" id="cd00086">
    <property type="entry name" value="homeodomain"/>
    <property type="match status" value="1"/>
</dbReference>
<dbReference type="FunFam" id="1.10.10.60:FF:000142">
    <property type="entry name" value="homeobox protein OTX2 isoform X2"/>
    <property type="match status" value="1"/>
</dbReference>
<dbReference type="Gene3D" id="1.10.10.60">
    <property type="entry name" value="Homeodomain-like"/>
    <property type="match status" value="1"/>
</dbReference>
<dbReference type="InterPro" id="IPR001356">
    <property type="entry name" value="HD"/>
</dbReference>
<dbReference type="InterPro" id="IPR017970">
    <property type="entry name" value="Homeobox_CS"/>
</dbReference>
<dbReference type="InterPro" id="IPR009057">
    <property type="entry name" value="Homeodomain-like_sf"/>
</dbReference>
<dbReference type="InterPro" id="IPR003025">
    <property type="entry name" value="Otx_TF"/>
</dbReference>
<dbReference type="InterPro" id="IPR013851">
    <property type="entry name" value="Otx_TF_C"/>
</dbReference>
<dbReference type="PANTHER" id="PTHR45793:SF22">
    <property type="entry name" value="CONE-ROD HOMEOBOX PROTEIN"/>
    <property type="match status" value="1"/>
</dbReference>
<dbReference type="PANTHER" id="PTHR45793">
    <property type="entry name" value="HOMEOBOX PROTEIN"/>
    <property type="match status" value="1"/>
</dbReference>
<dbReference type="Pfam" id="PF00046">
    <property type="entry name" value="Homeodomain"/>
    <property type="match status" value="1"/>
</dbReference>
<dbReference type="Pfam" id="PF03529">
    <property type="entry name" value="TF_Otx"/>
    <property type="match status" value="1"/>
</dbReference>
<dbReference type="PRINTS" id="PR01255">
    <property type="entry name" value="OTXHOMEOBOX"/>
</dbReference>
<dbReference type="SMART" id="SM00389">
    <property type="entry name" value="HOX"/>
    <property type="match status" value="1"/>
</dbReference>
<dbReference type="SUPFAM" id="SSF46689">
    <property type="entry name" value="Homeodomain-like"/>
    <property type="match status" value="1"/>
</dbReference>
<dbReference type="PROSITE" id="PS00027">
    <property type="entry name" value="HOMEOBOX_1"/>
    <property type="match status" value="1"/>
</dbReference>
<dbReference type="PROSITE" id="PS50071">
    <property type="entry name" value="HOMEOBOX_2"/>
    <property type="match status" value="1"/>
</dbReference>
<comment type="function">
    <text evidence="1 4">Transcription factor involved in anterior and eye development. Promotes the differentiation of both rod and cone photoreceptors cells in the retina. Together with other retinal homeobox proteins, acts as an effector of a cellular clock which, depending on cell cycle progression, establishes the generation of distinct retinal neuronal cell types. Acts synergistically with nrl to activate the rhodopsin promoter (By similarity). Promotes the formation of anterior regions and represses the formation of posterior structures during development.</text>
</comment>
<comment type="subcellular location">
    <subcellularLocation>
        <location evidence="1 2">Nucleus</location>
    </subcellularLocation>
</comment>
<comment type="tissue specificity">
    <text evidence="4">Initially expressed in the Spemann organizer region of early gastrula embryos. Expression then becomes localized to the anterior region; confined to the cement gland anlage at stages 19-25 and localized to the forebrain, optic vesicle and otocyst at stage 28.</text>
</comment>
<comment type="developmental stage">
    <text evidence="4">Expressed at low level from stage 1 to stage 9, when expression levels increase.</text>
</comment>
<proteinExistence type="evidence at transcript level"/>
<accession>Q9PVM0</accession>
<accession>Q5XH79</accession>
<protein>
    <recommendedName>
        <fullName>Homeobox protein otx5-A</fullName>
    </recommendedName>
    <alternativeName>
        <fullName>Orthodenticle homolog 5-A</fullName>
    </alternativeName>
    <alternativeName>
        <fullName>Xotx5</fullName>
    </alternativeName>
</protein>
<keyword id="KW-0217">Developmental protein</keyword>
<keyword id="KW-0221">Differentiation</keyword>
<keyword id="KW-0238">DNA-binding</keyword>
<keyword id="KW-0371">Homeobox</keyword>
<keyword id="KW-0539">Nucleus</keyword>
<keyword id="KW-1185">Reference proteome</keyword>
<keyword id="KW-0804">Transcription</keyword>
<keyword id="KW-0805">Transcription regulation</keyword>
<organism>
    <name type="scientific">Xenopus laevis</name>
    <name type="common">African clawed frog</name>
    <dbReference type="NCBI Taxonomy" id="8355"/>
    <lineage>
        <taxon>Eukaryota</taxon>
        <taxon>Metazoa</taxon>
        <taxon>Chordata</taxon>
        <taxon>Craniata</taxon>
        <taxon>Vertebrata</taxon>
        <taxon>Euteleostomi</taxon>
        <taxon>Amphibia</taxon>
        <taxon>Batrachia</taxon>
        <taxon>Anura</taxon>
        <taxon>Pipoidea</taxon>
        <taxon>Pipidae</taxon>
        <taxon>Xenopodinae</taxon>
        <taxon>Xenopus</taxon>
        <taxon>Xenopus</taxon>
    </lineage>
</organism>
<reference evidence="7" key="1">
    <citation type="journal article" date="2000" name="Dev. Growth Differ.">
        <title>Cloning a novel developmental regulating gene, Xotx5: its potential role in anterior formation in Xenopus laevis.</title>
        <authorList>
            <person name="Kuroda H."/>
            <person name="Hayata T."/>
            <person name="Eisaki A."/>
            <person name="Asashima M."/>
        </authorList>
    </citation>
    <scope>NUCLEOTIDE SEQUENCE [MRNA]</scope>
    <scope>FUNCTION</scope>
    <scope>TISSUE SPECIFICITY</scope>
    <scope>DEVELOPMENTAL STAGE</scope>
    <source>
        <tissue evidence="7">Cement gland</tissue>
    </source>
</reference>
<reference evidence="6" key="2">
    <citation type="submission" date="2004-10" db="EMBL/GenBank/DDBJ databases">
        <authorList>
            <consortium name="NIH - Xenopus Gene Collection (XGC) project"/>
        </authorList>
    </citation>
    <scope>NUCLEOTIDE SEQUENCE [LARGE SCALE MRNA]</scope>
    <source>
        <tissue evidence="6">Gastrula</tissue>
    </source>
</reference>
<name>OTX5A_XENLA</name>
<evidence type="ECO:0000250" key="1">
    <source>
        <dbReference type="UniProtKB" id="Q9PT61"/>
    </source>
</evidence>
<evidence type="ECO:0000255" key="2">
    <source>
        <dbReference type="PROSITE-ProRule" id="PRU00108"/>
    </source>
</evidence>
<evidence type="ECO:0000256" key="3">
    <source>
        <dbReference type="SAM" id="MobiDB-lite"/>
    </source>
</evidence>
<evidence type="ECO:0000269" key="4">
    <source>
    </source>
</evidence>
<evidence type="ECO:0000305" key="5"/>
<evidence type="ECO:0000312" key="6">
    <source>
        <dbReference type="EMBL" id="AAH84194.1"/>
    </source>
</evidence>
<evidence type="ECO:0000312" key="7">
    <source>
        <dbReference type="EMBL" id="BAA86260.1"/>
    </source>
</evidence>
<sequence length="290" mass="31552">MMSYIKQPHYAVNGLTLAGTGMDLLHSAVGYPTTPRKQRRERTTFTRAQLDILESLFAKTRYPDIFMREEVALKINLPESRVQVWFKNRRAKCRQQQQQSTGQAKPRPAKKKTSPARETNSEASTNGQYSPPPPGTAVTPSSTAGATVSIWSPASISPIPDPLSIATTPCMQRSAGYPMTYSQAPAYTQSYGGSSSYFTGLDCGSYLSPMHPQLSAPGSTLSPIASSTMGSHLSQSPASLSAQGYGASSLGFTSVDCLDYKDQTASWKLNFNATDCLDYKDQSSWKFQVL</sequence>
<gene>
    <name type="primary">otx5-a</name>
</gene>